<name>RS13_ACIBS</name>
<sequence>MARIAGVNIPDNKHAVISLTYIFGIGRHTAKNILAAVGITETTKIRELDDAQLDAIRAEVAKVPTEGDLRREISMNIKRLMDLGCYRGLRHRRSLPVRGQRTKTNARTRKGPRKPIKK</sequence>
<comment type="function">
    <text evidence="1">Located at the top of the head of the 30S subunit, it contacts several helices of the 16S rRNA. In the 70S ribosome it contacts the 23S rRNA (bridge B1a) and protein L5 of the 50S subunit (bridge B1b), connecting the 2 subunits; these bridges are implicated in subunit movement. Contacts the tRNAs in the A and P-sites.</text>
</comment>
<comment type="subunit">
    <text evidence="1">Part of the 30S ribosomal subunit. Forms a loose heterodimer with protein S19. Forms two bridges to the 50S subunit in the 70S ribosome.</text>
</comment>
<comment type="similarity">
    <text evidence="1">Belongs to the universal ribosomal protein uS13 family.</text>
</comment>
<proteinExistence type="inferred from homology"/>
<protein>
    <recommendedName>
        <fullName evidence="1">Small ribosomal subunit protein uS13</fullName>
    </recommendedName>
    <alternativeName>
        <fullName evidence="3">30S ribosomal protein S13</fullName>
    </alternativeName>
</protein>
<keyword id="KW-0687">Ribonucleoprotein</keyword>
<keyword id="KW-0689">Ribosomal protein</keyword>
<keyword id="KW-0694">RNA-binding</keyword>
<keyword id="KW-0699">rRNA-binding</keyword>
<keyword id="KW-0820">tRNA-binding</keyword>
<organism>
    <name type="scientific">Acinetobacter baumannii (strain SDF)</name>
    <dbReference type="NCBI Taxonomy" id="509170"/>
    <lineage>
        <taxon>Bacteria</taxon>
        <taxon>Pseudomonadati</taxon>
        <taxon>Pseudomonadota</taxon>
        <taxon>Gammaproteobacteria</taxon>
        <taxon>Moraxellales</taxon>
        <taxon>Moraxellaceae</taxon>
        <taxon>Acinetobacter</taxon>
        <taxon>Acinetobacter calcoaceticus/baumannii complex</taxon>
    </lineage>
</organism>
<gene>
    <name evidence="1" type="primary">rpsM</name>
    <name type="ordered locus">ABSDF0445</name>
</gene>
<reference key="1">
    <citation type="journal article" date="2008" name="PLoS ONE">
        <title>Comparative analysis of Acinetobacters: three genomes for three lifestyles.</title>
        <authorList>
            <person name="Vallenet D."/>
            <person name="Nordmann P."/>
            <person name="Barbe V."/>
            <person name="Poirel L."/>
            <person name="Mangenot S."/>
            <person name="Bataille E."/>
            <person name="Dossat C."/>
            <person name="Gas S."/>
            <person name="Kreimeyer A."/>
            <person name="Lenoble P."/>
            <person name="Oztas S."/>
            <person name="Poulain J."/>
            <person name="Segurens B."/>
            <person name="Robert C."/>
            <person name="Abergel C."/>
            <person name="Claverie J.-M."/>
            <person name="Raoult D."/>
            <person name="Medigue C."/>
            <person name="Weissenbach J."/>
            <person name="Cruveiller S."/>
        </authorList>
    </citation>
    <scope>NUCLEOTIDE SEQUENCE [LARGE SCALE GENOMIC DNA]</scope>
    <source>
        <strain>SDF</strain>
    </source>
</reference>
<feature type="chain" id="PRO_1000141206" description="Small ribosomal subunit protein uS13">
    <location>
        <begin position="1"/>
        <end position="118"/>
    </location>
</feature>
<feature type="region of interest" description="Disordered" evidence="2">
    <location>
        <begin position="92"/>
        <end position="118"/>
    </location>
</feature>
<accession>B0VQU0</accession>
<evidence type="ECO:0000255" key="1">
    <source>
        <dbReference type="HAMAP-Rule" id="MF_01315"/>
    </source>
</evidence>
<evidence type="ECO:0000256" key="2">
    <source>
        <dbReference type="SAM" id="MobiDB-lite"/>
    </source>
</evidence>
<evidence type="ECO:0000305" key="3"/>
<dbReference type="EMBL" id="CU468230">
    <property type="protein sequence ID" value="CAO99836.1"/>
    <property type="molecule type" value="Genomic_DNA"/>
</dbReference>
<dbReference type="SMR" id="B0VQU0"/>
<dbReference type="KEGG" id="abm:ABSDF0445"/>
<dbReference type="HOGENOM" id="CLU_103849_1_2_6"/>
<dbReference type="Proteomes" id="UP000001741">
    <property type="component" value="Chromosome"/>
</dbReference>
<dbReference type="GO" id="GO:0005829">
    <property type="term" value="C:cytosol"/>
    <property type="evidence" value="ECO:0007669"/>
    <property type="project" value="TreeGrafter"/>
</dbReference>
<dbReference type="GO" id="GO:0015935">
    <property type="term" value="C:small ribosomal subunit"/>
    <property type="evidence" value="ECO:0007669"/>
    <property type="project" value="TreeGrafter"/>
</dbReference>
<dbReference type="GO" id="GO:0019843">
    <property type="term" value="F:rRNA binding"/>
    <property type="evidence" value="ECO:0007669"/>
    <property type="project" value="UniProtKB-UniRule"/>
</dbReference>
<dbReference type="GO" id="GO:0003735">
    <property type="term" value="F:structural constituent of ribosome"/>
    <property type="evidence" value="ECO:0007669"/>
    <property type="project" value="InterPro"/>
</dbReference>
<dbReference type="GO" id="GO:0000049">
    <property type="term" value="F:tRNA binding"/>
    <property type="evidence" value="ECO:0007669"/>
    <property type="project" value="UniProtKB-UniRule"/>
</dbReference>
<dbReference type="GO" id="GO:0006412">
    <property type="term" value="P:translation"/>
    <property type="evidence" value="ECO:0007669"/>
    <property type="project" value="UniProtKB-UniRule"/>
</dbReference>
<dbReference type="FunFam" id="1.10.8.50:FF:000001">
    <property type="entry name" value="30S ribosomal protein S13"/>
    <property type="match status" value="1"/>
</dbReference>
<dbReference type="FunFam" id="4.10.910.10:FF:000001">
    <property type="entry name" value="30S ribosomal protein S13"/>
    <property type="match status" value="1"/>
</dbReference>
<dbReference type="Gene3D" id="1.10.8.50">
    <property type="match status" value="1"/>
</dbReference>
<dbReference type="Gene3D" id="4.10.910.10">
    <property type="entry name" value="30s ribosomal protein s13, domain 2"/>
    <property type="match status" value="1"/>
</dbReference>
<dbReference type="HAMAP" id="MF_01315">
    <property type="entry name" value="Ribosomal_uS13"/>
    <property type="match status" value="1"/>
</dbReference>
<dbReference type="InterPro" id="IPR027437">
    <property type="entry name" value="Rbsml_uS13_C"/>
</dbReference>
<dbReference type="InterPro" id="IPR001892">
    <property type="entry name" value="Ribosomal_uS13"/>
</dbReference>
<dbReference type="InterPro" id="IPR010979">
    <property type="entry name" value="Ribosomal_uS13-like_H2TH"/>
</dbReference>
<dbReference type="InterPro" id="IPR019980">
    <property type="entry name" value="Ribosomal_uS13_bac-type"/>
</dbReference>
<dbReference type="InterPro" id="IPR018269">
    <property type="entry name" value="Ribosomal_uS13_CS"/>
</dbReference>
<dbReference type="NCBIfam" id="TIGR03631">
    <property type="entry name" value="uS13_bact"/>
    <property type="match status" value="1"/>
</dbReference>
<dbReference type="PANTHER" id="PTHR10871">
    <property type="entry name" value="30S RIBOSOMAL PROTEIN S13/40S RIBOSOMAL PROTEIN S18"/>
    <property type="match status" value="1"/>
</dbReference>
<dbReference type="PANTHER" id="PTHR10871:SF1">
    <property type="entry name" value="SMALL RIBOSOMAL SUBUNIT PROTEIN US13M"/>
    <property type="match status" value="1"/>
</dbReference>
<dbReference type="Pfam" id="PF00416">
    <property type="entry name" value="Ribosomal_S13"/>
    <property type="match status" value="2"/>
</dbReference>
<dbReference type="PIRSF" id="PIRSF002134">
    <property type="entry name" value="Ribosomal_S13"/>
    <property type="match status" value="1"/>
</dbReference>
<dbReference type="SUPFAM" id="SSF46946">
    <property type="entry name" value="S13-like H2TH domain"/>
    <property type="match status" value="1"/>
</dbReference>
<dbReference type="PROSITE" id="PS00646">
    <property type="entry name" value="RIBOSOMAL_S13_1"/>
    <property type="match status" value="1"/>
</dbReference>
<dbReference type="PROSITE" id="PS50159">
    <property type="entry name" value="RIBOSOMAL_S13_2"/>
    <property type="match status" value="1"/>
</dbReference>